<accession>Q9H3R2</accession>
<accession>Q6UWD9</accession>
<accession>Q9NXT5</accession>
<evidence type="ECO:0000255" key="1"/>
<evidence type="ECO:0000255" key="2">
    <source>
        <dbReference type="PROSITE-ProRule" id="PRU00076"/>
    </source>
</evidence>
<evidence type="ECO:0000255" key="3">
    <source>
        <dbReference type="PROSITE-ProRule" id="PRU00188"/>
    </source>
</evidence>
<evidence type="ECO:0000256" key="4">
    <source>
        <dbReference type="SAM" id="MobiDB-lite"/>
    </source>
</evidence>
<evidence type="ECO:0000269" key="5">
    <source>
    </source>
</evidence>
<evidence type="ECO:0000269" key="6">
    <source>
    </source>
</evidence>
<evidence type="ECO:0000305" key="7"/>
<protein>
    <recommendedName>
        <fullName>Mucin-13</fullName>
        <shortName>MUC-13</shortName>
    </recommendedName>
    <alternativeName>
        <fullName>Down-regulated in colon cancer 1</fullName>
    </alternativeName>
</protein>
<name>MUC13_HUMAN</name>
<comment type="function">
    <text>Epithelial and hemopoietic transmembrane mucin that may play a role in cell signaling.</text>
</comment>
<comment type="subunit">
    <text evidence="5">Homodimer of beta subunits.</text>
</comment>
<comment type="subcellular location">
    <subcellularLocation>
        <location evidence="5">Cell membrane</location>
        <topology evidence="5">Single-pass type I membrane protein</topology>
    </subcellularLocation>
    <subcellularLocation>
        <location evidence="5">Apical cell membrane</location>
    </subcellularLocation>
    <subcellularLocation>
        <location evidence="5">Secreted</location>
    </subcellularLocation>
    <text>Also exists as a soluble form.</text>
</comment>
<comment type="tissue specificity">
    <text evidence="5">Highly expressed in epithelial tissues, particularly those of the gastrointestinal and respiratory tracts, such as large intestine and trachea, followed by kidney, small intestine, appendix and stomach.</text>
</comment>
<comment type="PTM">
    <text>Cleaved into two subunits, alpha and beta, probably between the first EGF domain and the SEA domain. Beta subunit contains the cytoplasmic tail and alpha subunit the extracellular tail. The homooligomerization into dimers is dependent on intrachain disulfide bonds.</text>
</comment>
<comment type="PTM">
    <text evidence="5">Highly N-glycosylated.</text>
</comment>
<comment type="sequence caution" evidence="7">
    <conflict type="erroneous initiation">
        <sequence resource="EMBL-CDS" id="BAA90925"/>
    </conflict>
    <text>Truncated N-terminus.</text>
</comment>
<comment type="online information" name="Mucin database">
    <link uri="http://www.medkem.gu.se/mucinbiology/databases/"/>
</comment>
<comment type="online information" name="Atlas of Genetics and Cytogenetics in Oncology and Haematology">
    <link uri="https://atlasgeneticsoncology.org/gene/41454/MUC13"/>
</comment>
<feature type="signal peptide" evidence="1">
    <location>
        <begin position="1"/>
        <end position="18"/>
    </location>
</feature>
<feature type="chain" id="PRO_0000019284" description="Mucin-13">
    <location>
        <begin position="19"/>
        <end position="512"/>
    </location>
</feature>
<feature type="topological domain" description="Extracellular" evidence="1">
    <location>
        <begin position="19"/>
        <end position="421"/>
    </location>
</feature>
<feature type="transmembrane region" description="Helical" evidence="1">
    <location>
        <begin position="422"/>
        <end position="442"/>
    </location>
</feature>
<feature type="topological domain" description="Cytoplasmic" evidence="1">
    <location>
        <begin position="443"/>
        <end position="512"/>
    </location>
</feature>
<feature type="domain" description="EGF-like 1" evidence="2">
    <location>
        <begin position="173"/>
        <end position="211"/>
    </location>
</feature>
<feature type="domain" description="SEA" evidence="3">
    <location>
        <begin position="212"/>
        <end position="336"/>
    </location>
</feature>
<feature type="domain" description="EGF-like 2" evidence="2">
    <location>
        <begin position="322"/>
        <end position="361"/>
    </location>
</feature>
<feature type="domain" description="EGF-like 3" evidence="2">
    <location>
        <begin position="363"/>
        <end position="404"/>
    </location>
</feature>
<feature type="region of interest" description="Disordered" evidence="4">
    <location>
        <begin position="22"/>
        <end position="67"/>
    </location>
</feature>
<feature type="region of interest" description="Disordered" evidence="4">
    <location>
        <begin position="133"/>
        <end position="176"/>
    </location>
</feature>
<feature type="region of interest" description="Disordered" evidence="4">
    <location>
        <begin position="493"/>
        <end position="512"/>
    </location>
</feature>
<feature type="compositionally biased region" description="Polar residues" evidence="4">
    <location>
        <begin position="22"/>
        <end position="38"/>
    </location>
</feature>
<feature type="compositionally biased region" description="Low complexity" evidence="4">
    <location>
        <begin position="53"/>
        <end position="67"/>
    </location>
</feature>
<feature type="compositionally biased region" description="Polar residues" evidence="4">
    <location>
        <begin position="135"/>
        <end position="176"/>
    </location>
</feature>
<feature type="compositionally biased region" description="Polar residues" evidence="4">
    <location>
        <begin position="493"/>
        <end position="505"/>
    </location>
</feature>
<feature type="glycosylation site" description="N-linked (GlcNAc...) asparagine" evidence="1">
    <location>
        <position position="151"/>
    </location>
</feature>
<feature type="glycosylation site" description="N-linked (GlcNAc...) asparagine" evidence="1">
    <location>
        <position position="169"/>
    </location>
</feature>
<feature type="glycosylation site" description="N-linked (GlcNAc...) asparagine" evidence="1">
    <location>
        <position position="193"/>
    </location>
</feature>
<feature type="glycosylation site" description="N-linked (GlcNAc...) asparagine" evidence="1">
    <location>
        <position position="206"/>
    </location>
</feature>
<feature type="glycosylation site" description="N-linked (GlcNAc...) asparagine" evidence="1">
    <location>
        <position position="284"/>
    </location>
</feature>
<feature type="glycosylation site" description="N-linked (GlcNAc...) asparagine" evidence="1">
    <location>
        <position position="332"/>
    </location>
</feature>
<feature type="disulfide bond" evidence="2">
    <location>
        <begin position="177"/>
        <end position="188"/>
    </location>
</feature>
<feature type="disulfide bond" evidence="2">
    <location>
        <begin position="182"/>
        <end position="197"/>
    </location>
</feature>
<feature type="disulfide bond" evidence="2">
    <location>
        <begin position="199"/>
        <end position="210"/>
    </location>
</feature>
<feature type="disulfide bond" evidence="2">
    <location>
        <begin position="326"/>
        <end position="338"/>
    </location>
</feature>
<feature type="disulfide bond" evidence="2">
    <location>
        <begin position="331"/>
        <end position="344"/>
    </location>
</feature>
<feature type="disulfide bond" evidence="2">
    <location>
        <begin position="346"/>
        <end position="360"/>
    </location>
</feature>
<feature type="disulfide bond" evidence="2">
    <location>
        <begin position="367"/>
        <end position="378"/>
    </location>
</feature>
<feature type="disulfide bond" evidence="2">
    <location>
        <begin position="371"/>
        <end position="389"/>
    </location>
</feature>
<feature type="disulfide bond" evidence="2">
    <location>
        <begin position="391"/>
        <end position="403"/>
    </location>
</feature>
<feature type="sequence variant" id="VAR_056589" description="In dbSNP:rs4679394.">
    <original>A</original>
    <variation>V</variation>
    <location>
        <position position="18"/>
    </location>
</feature>
<feature type="sequence variant" id="VAR_063124" description="In dbSNP:rs4679392.">
    <original>I</original>
    <variation>T</variation>
    <location>
        <position position="100"/>
    </location>
</feature>
<feature type="sequence variant" id="VAR_056590" description="In dbSNP:rs16836185.">
    <original>S</original>
    <variation>G</variation>
    <location>
        <position position="364"/>
    </location>
</feature>
<feature type="sequence variant" id="VAR_056591" description="In dbSNP:rs1127233." evidence="6">
    <original>R</original>
    <variation>S</variation>
    <location>
        <position position="503"/>
    </location>
</feature>
<feature type="sequence conflict" description="In Ref. 5; BAA90925." evidence="7" ref="5">
    <original>F</original>
    <variation>I</variation>
    <location>
        <position position="196"/>
    </location>
</feature>
<reference key="1">
    <citation type="submission" date="1999-12" db="EMBL/GenBank/DDBJ databases">
        <title>Isolation and characterization of a novel human gene DRCC1 encoding a mucin-like glycoprotein, homologous to murine cell surface antigen 114/A10, and its reduced expression in colorectal cancers.</title>
        <authorList>
            <person name="Masayoshi I."/>
            <person name="Furukawa Y."/>
            <person name="Akashi H."/>
            <person name="Han H."/>
            <person name="Nakajima Y."/>
            <person name="Sugano S."/>
            <person name="Ogawa M."/>
            <person name="Nakamura Y."/>
        </authorList>
    </citation>
    <scope>NUCLEOTIDE SEQUENCE [MRNA]</scope>
</reference>
<reference key="2">
    <citation type="journal article" date="2001" name="J. Biol. Chem.">
        <title>Muc13, a novel human cell surface mucin expressed by epithelial and hemopoietic cells.</title>
        <authorList>
            <person name="Williams S.J."/>
            <person name="Wreschner D.H."/>
            <person name="Tran M."/>
            <person name="Eyre H.J."/>
            <person name="Sutherland G.R."/>
            <person name="McGuckin M.A."/>
        </authorList>
    </citation>
    <scope>NUCLEOTIDE SEQUENCE [MRNA]</scope>
    <scope>INTRACELLULAR CLEAVAGE</scope>
    <scope>SUBUNIT</scope>
    <scope>SUBCELLULAR LOCATION</scope>
    <scope>TISSUE SPECIFICITY</scope>
    <scope>GLYCOSYLATION</scope>
</reference>
<reference key="3">
    <citation type="journal article" date="2003" name="Genome Res.">
        <title>The secreted protein discovery initiative (SPDI), a large-scale effort to identify novel human secreted and transmembrane proteins: a bioinformatics assessment.</title>
        <authorList>
            <person name="Clark H.F."/>
            <person name="Gurney A.L."/>
            <person name="Abaya E."/>
            <person name="Baker K."/>
            <person name="Baldwin D.T."/>
            <person name="Brush J."/>
            <person name="Chen J."/>
            <person name="Chow B."/>
            <person name="Chui C."/>
            <person name="Crowley C."/>
            <person name="Currell B."/>
            <person name="Deuel B."/>
            <person name="Dowd P."/>
            <person name="Eaton D."/>
            <person name="Foster J.S."/>
            <person name="Grimaldi C."/>
            <person name="Gu Q."/>
            <person name="Hass P.E."/>
            <person name="Heldens S."/>
            <person name="Huang A."/>
            <person name="Kim H.S."/>
            <person name="Klimowski L."/>
            <person name="Jin Y."/>
            <person name="Johnson S."/>
            <person name="Lee J."/>
            <person name="Lewis L."/>
            <person name="Liao D."/>
            <person name="Mark M.R."/>
            <person name="Robbie E."/>
            <person name="Sanchez C."/>
            <person name="Schoenfeld J."/>
            <person name="Seshagiri S."/>
            <person name="Simmons L."/>
            <person name="Singh J."/>
            <person name="Smith V."/>
            <person name="Stinson J."/>
            <person name="Vagts A."/>
            <person name="Vandlen R.L."/>
            <person name="Watanabe C."/>
            <person name="Wieand D."/>
            <person name="Woods K."/>
            <person name="Xie M.-H."/>
            <person name="Yansura D.G."/>
            <person name="Yi S."/>
            <person name="Yu G."/>
            <person name="Yuan J."/>
            <person name="Zhang M."/>
            <person name="Zhang Z."/>
            <person name="Goddard A.D."/>
            <person name="Wood W.I."/>
            <person name="Godowski P.J."/>
            <person name="Gray A.M."/>
        </authorList>
    </citation>
    <scope>NUCLEOTIDE SEQUENCE [LARGE SCALE MRNA]</scope>
    <scope>VARIANT SER-503</scope>
</reference>
<reference key="4">
    <citation type="journal article" date="2006" name="Nature">
        <title>The DNA sequence, annotation and analysis of human chromosome 3.</title>
        <authorList>
            <person name="Muzny D.M."/>
            <person name="Scherer S.E."/>
            <person name="Kaul R."/>
            <person name="Wang J."/>
            <person name="Yu J."/>
            <person name="Sudbrak R."/>
            <person name="Buhay C.J."/>
            <person name="Chen R."/>
            <person name="Cree A."/>
            <person name="Ding Y."/>
            <person name="Dugan-Rocha S."/>
            <person name="Gill R."/>
            <person name="Gunaratne P."/>
            <person name="Harris R.A."/>
            <person name="Hawes A.C."/>
            <person name="Hernandez J."/>
            <person name="Hodgson A.V."/>
            <person name="Hume J."/>
            <person name="Jackson A."/>
            <person name="Khan Z.M."/>
            <person name="Kovar-Smith C."/>
            <person name="Lewis L.R."/>
            <person name="Lozado R.J."/>
            <person name="Metzker M.L."/>
            <person name="Milosavljevic A."/>
            <person name="Miner G.R."/>
            <person name="Morgan M.B."/>
            <person name="Nazareth L.V."/>
            <person name="Scott G."/>
            <person name="Sodergren E."/>
            <person name="Song X.-Z."/>
            <person name="Steffen D."/>
            <person name="Wei S."/>
            <person name="Wheeler D.A."/>
            <person name="Wright M.W."/>
            <person name="Worley K.C."/>
            <person name="Yuan Y."/>
            <person name="Zhang Z."/>
            <person name="Adams C.Q."/>
            <person name="Ansari-Lari M.A."/>
            <person name="Ayele M."/>
            <person name="Brown M.J."/>
            <person name="Chen G."/>
            <person name="Chen Z."/>
            <person name="Clendenning J."/>
            <person name="Clerc-Blankenburg K.P."/>
            <person name="Chen R."/>
            <person name="Chen Z."/>
            <person name="Davis C."/>
            <person name="Delgado O."/>
            <person name="Dinh H.H."/>
            <person name="Dong W."/>
            <person name="Draper H."/>
            <person name="Ernst S."/>
            <person name="Fu G."/>
            <person name="Gonzalez-Garay M.L."/>
            <person name="Garcia D.K."/>
            <person name="Gillett W."/>
            <person name="Gu J."/>
            <person name="Hao B."/>
            <person name="Haugen E."/>
            <person name="Havlak P."/>
            <person name="He X."/>
            <person name="Hennig S."/>
            <person name="Hu S."/>
            <person name="Huang W."/>
            <person name="Jackson L.R."/>
            <person name="Jacob L.S."/>
            <person name="Kelly S.H."/>
            <person name="Kube M."/>
            <person name="Levy R."/>
            <person name="Li Z."/>
            <person name="Liu B."/>
            <person name="Liu J."/>
            <person name="Liu W."/>
            <person name="Lu J."/>
            <person name="Maheshwari M."/>
            <person name="Nguyen B.-V."/>
            <person name="Okwuonu G.O."/>
            <person name="Palmeiri A."/>
            <person name="Pasternak S."/>
            <person name="Perez L.M."/>
            <person name="Phelps K.A."/>
            <person name="Plopper F.J."/>
            <person name="Qiang B."/>
            <person name="Raymond C."/>
            <person name="Rodriguez R."/>
            <person name="Saenphimmachak C."/>
            <person name="Santibanez J."/>
            <person name="Shen H."/>
            <person name="Shen Y."/>
            <person name="Subramanian S."/>
            <person name="Tabor P.E."/>
            <person name="Verduzco D."/>
            <person name="Waldron L."/>
            <person name="Wang J."/>
            <person name="Wang J."/>
            <person name="Wang Q."/>
            <person name="Williams G.A."/>
            <person name="Wong G.K.-S."/>
            <person name="Yao Z."/>
            <person name="Zhang J."/>
            <person name="Zhang X."/>
            <person name="Zhao G."/>
            <person name="Zhou J."/>
            <person name="Zhou Y."/>
            <person name="Nelson D."/>
            <person name="Lehrach H."/>
            <person name="Reinhardt R."/>
            <person name="Naylor S.L."/>
            <person name="Yang H."/>
            <person name="Olson M."/>
            <person name="Weinstock G."/>
            <person name="Gibbs R.A."/>
        </authorList>
    </citation>
    <scope>NUCLEOTIDE SEQUENCE [LARGE SCALE GENOMIC DNA]</scope>
</reference>
<reference key="5">
    <citation type="journal article" date="2004" name="Nat. Genet.">
        <title>Complete sequencing and characterization of 21,243 full-length human cDNAs.</title>
        <authorList>
            <person name="Ota T."/>
            <person name="Suzuki Y."/>
            <person name="Nishikawa T."/>
            <person name="Otsuki T."/>
            <person name="Sugiyama T."/>
            <person name="Irie R."/>
            <person name="Wakamatsu A."/>
            <person name="Hayashi K."/>
            <person name="Sato H."/>
            <person name="Nagai K."/>
            <person name="Kimura K."/>
            <person name="Makita H."/>
            <person name="Sekine M."/>
            <person name="Obayashi M."/>
            <person name="Nishi T."/>
            <person name="Shibahara T."/>
            <person name="Tanaka T."/>
            <person name="Ishii S."/>
            <person name="Yamamoto J."/>
            <person name="Saito K."/>
            <person name="Kawai Y."/>
            <person name="Isono Y."/>
            <person name="Nakamura Y."/>
            <person name="Nagahari K."/>
            <person name="Murakami K."/>
            <person name="Yasuda T."/>
            <person name="Iwayanagi T."/>
            <person name="Wagatsuma M."/>
            <person name="Shiratori A."/>
            <person name="Sudo H."/>
            <person name="Hosoiri T."/>
            <person name="Kaku Y."/>
            <person name="Kodaira H."/>
            <person name="Kondo H."/>
            <person name="Sugawara M."/>
            <person name="Takahashi M."/>
            <person name="Kanda K."/>
            <person name="Yokoi T."/>
            <person name="Furuya T."/>
            <person name="Kikkawa E."/>
            <person name="Omura Y."/>
            <person name="Abe K."/>
            <person name="Kamihara K."/>
            <person name="Katsuta N."/>
            <person name="Sato K."/>
            <person name="Tanikawa M."/>
            <person name="Yamazaki M."/>
            <person name="Ninomiya K."/>
            <person name="Ishibashi T."/>
            <person name="Yamashita H."/>
            <person name="Murakawa K."/>
            <person name="Fujimori K."/>
            <person name="Tanai H."/>
            <person name="Kimata M."/>
            <person name="Watanabe M."/>
            <person name="Hiraoka S."/>
            <person name="Chiba Y."/>
            <person name="Ishida S."/>
            <person name="Ono Y."/>
            <person name="Takiguchi S."/>
            <person name="Watanabe S."/>
            <person name="Yosida M."/>
            <person name="Hotuta T."/>
            <person name="Kusano J."/>
            <person name="Kanehori K."/>
            <person name="Takahashi-Fujii A."/>
            <person name="Hara H."/>
            <person name="Tanase T.-O."/>
            <person name="Nomura Y."/>
            <person name="Togiya S."/>
            <person name="Komai F."/>
            <person name="Hara R."/>
            <person name="Takeuchi K."/>
            <person name="Arita M."/>
            <person name="Imose N."/>
            <person name="Musashino K."/>
            <person name="Yuuki H."/>
            <person name="Oshima A."/>
            <person name="Sasaki N."/>
            <person name="Aotsuka S."/>
            <person name="Yoshikawa Y."/>
            <person name="Matsunawa H."/>
            <person name="Ichihara T."/>
            <person name="Shiohata N."/>
            <person name="Sano S."/>
            <person name="Moriya S."/>
            <person name="Momiyama H."/>
            <person name="Satoh N."/>
            <person name="Takami S."/>
            <person name="Terashima Y."/>
            <person name="Suzuki O."/>
            <person name="Nakagawa S."/>
            <person name="Senoh A."/>
            <person name="Mizoguchi H."/>
            <person name="Goto Y."/>
            <person name="Shimizu F."/>
            <person name="Wakebe H."/>
            <person name="Hishigaki H."/>
            <person name="Watanabe T."/>
            <person name="Sugiyama A."/>
            <person name="Takemoto M."/>
            <person name="Kawakami B."/>
            <person name="Yamazaki M."/>
            <person name="Watanabe K."/>
            <person name="Kumagai A."/>
            <person name="Itakura S."/>
            <person name="Fukuzumi Y."/>
            <person name="Fujimori Y."/>
            <person name="Komiyama M."/>
            <person name="Tashiro H."/>
            <person name="Tanigami A."/>
            <person name="Fujiwara T."/>
            <person name="Ono T."/>
            <person name="Yamada K."/>
            <person name="Fujii Y."/>
            <person name="Ozaki K."/>
            <person name="Hirao M."/>
            <person name="Ohmori Y."/>
            <person name="Kawabata A."/>
            <person name="Hikiji T."/>
            <person name="Kobatake N."/>
            <person name="Inagaki H."/>
            <person name="Ikema Y."/>
            <person name="Okamoto S."/>
            <person name="Okitani R."/>
            <person name="Kawakami T."/>
            <person name="Noguchi S."/>
            <person name="Itoh T."/>
            <person name="Shigeta K."/>
            <person name="Senba T."/>
            <person name="Matsumura K."/>
            <person name="Nakajima Y."/>
            <person name="Mizuno T."/>
            <person name="Morinaga M."/>
            <person name="Sasaki M."/>
            <person name="Togashi T."/>
            <person name="Oyama M."/>
            <person name="Hata H."/>
            <person name="Watanabe M."/>
            <person name="Komatsu T."/>
            <person name="Mizushima-Sugano J."/>
            <person name="Satoh T."/>
            <person name="Shirai Y."/>
            <person name="Takahashi Y."/>
            <person name="Nakagawa K."/>
            <person name="Okumura K."/>
            <person name="Nagase T."/>
            <person name="Nomura N."/>
            <person name="Kikuchi H."/>
            <person name="Masuho Y."/>
            <person name="Yamashita R."/>
            <person name="Nakai K."/>
            <person name="Yada T."/>
            <person name="Nakamura Y."/>
            <person name="Ohara O."/>
            <person name="Isogai T."/>
            <person name="Sugano S."/>
        </authorList>
    </citation>
    <scope>NUCLEOTIDE SEQUENCE [LARGE SCALE MRNA] OF 196-512</scope>
    <source>
        <tissue>Colon</tissue>
    </source>
</reference>
<gene>
    <name type="primary">MUC13</name>
    <name type="synonym">DRCC1</name>
    <name type="synonym">RECC</name>
    <name type="ORF">UNQ6194/PRO20221</name>
</gene>
<keyword id="KW-1003">Cell membrane</keyword>
<keyword id="KW-1015">Disulfide bond</keyword>
<keyword id="KW-0245">EGF-like domain</keyword>
<keyword id="KW-0325">Glycoprotein</keyword>
<keyword id="KW-0472">Membrane</keyword>
<keyword id="KW-1267">Proteomics identification</keyword>
<keyword id="KW-1185">Reference proteome</keyword>
<keyword id="KW-0677">Repeat</keyword>
<keyword id="KW-0964">Secreted</keyword>
<keyword id="KW-0732">Signal</keyword>
<keyword id="KW-0812">Transmembrane</keyword>
<keyword id="KW-1133">Transmembrane helix</keyword>
<proteinExistence type="evidence at protein level"/>
<organism>
    <name type="scientific">Homo sapiens</name>
    <name type="common">Human</name>
    <dbReference type="NCBI Taxonomy" id="9606"/>
    <lineage>
        <taxon>Eukaryota</taxon>
        <taxon>Metazoa</taxon>
        <taxon>Chordata</taxon>
        <taxon>Craniata</taxon>
        <taxon>Vertebrata</taxon>
        <taxon>Euteleostomi</taxon>
        <taxon>Mammalia</taxon>
        <taxon>Eutheria</taxon>
        <taxon>Euarchontoglires</taxon>
        <taxon>Primates</taxon>
        <taxon>Haplorrhini</taxon>
        <taxon>Catarrhini</taxon>
        <taxon>Hominidae</taxon>
        <taxon>Homo</taxon>
    </lineage>
</organism>
<sequence>MKAIIHLTLLALLSVNTATNQGNSADAVTTTETATSGPTVAAADTTETNFPETASTTANTPSFPTATSPAPPIISTHSSSTIPTPAPPIISTHSSSTIPIPTAADSESTTNVNSLATSDIITASSPNDGLITMVPSETQSNNEMSPTTEDNQSSGPPTGTALLETSTLNSTGPSNPCQDDPCADNSLCVKLHNTSFCLCLEGYYYNSSTCKKGKVFPGKISVTVSETFDPEEKHSMAYQDLHSEITSLFKDVFGTSVYGQTVILTVSTSLSPRSEMRADDKFVNVTIVTILAETTSDNEKTVTEKINKAIRSSSSNFLNYDLTLRCDYYGCNQTADDCLNGLACDCKSDLQRPNPQSPFCVASSLKCPDACNAQHKQCLIKKSGGAPECACVPGYQEDANGNCQKCAFGYSGLDCKDKFQLILTIVGTIAGIVILSMIIALIVTARSNNKTKHIEEENLIDEDFQNLKLRSTGFTNLGAEGSVFPKVRITASRDSQMQNPYSRHSSMPRPDY</sequence>
<dbReference type="EMBL" id="AB035807">
    <property type="protein sequence ID" value="BAB19651.1"/>
    <property type="molecule type" value="mRNA"/>
</dbReference>
<dbReference type="EMBL" id="AF286113">
    <property type="protein sequence ID" value="AAK56861.1"/>
    <property type="molecule type" value="mRNA"/>
</dbReference>
<dbReference type="EMBL" id="AY358831">
    <property type="protein sequence ID" value="AAQ89190.1"/>
    <property type="molecule type" value="mRNA"/>
</dbReference>
<dbReference type="EMBL" id="AC026342">
    <property type="status" value="NOT_ANNOTATED_CDS"/>
    <property type="molecule type" value="Genomic_DNA"/>
</dbReference>
<dbReference type="EMBL" id="AK000070">
    <property type="protein sequence ID" value="BAA90925.1"/>
    <property type="status" value="ALT_INIT"/>
    <property type="molecule type" value="mRNA"/>
</dbReference>
<dbReference type="CCDS" id="CCDS33839.2"/>
<dbReference type="RefSeq" id="NP_149038.3">
    <property type="nucleotide sequence ID" value="NM_033049.4"/>
</dbReference>
<dbReference type="SMR" id="Q9H3R2"/>
<dbReference type="BioGRID" id="121177">
    <property type="interactions" value="46"/>
</dbReference>
<dbReference type="FunCoup" id="Q9H3R2">
    <property type="interactions" value="345"/>
</dbReference>
<dbReference type="IntAct" id="Q9H3R2">
    <property type="interactions" value="18"/>
</dbReference>
<dbReference type="STRING" id="9606.ENSP00000485028"/>
<dbReference type="TCDB" id="9.B.452.1.1">
    <property type="family name" value="the mucin13 (muc13) family"/>
</dbReference>
<dbReference type="GlyCosmos" id="Q9H3R2">
    <property type="glycosylation" value="6 sites, No reported glycans"/>
</dbReference>
<dbReference type="GlyGen" id="Q9H3R2">
    <property type="glycosylation" value="10 sites, 1 O-linked glycan (3 sites)"/>
</dbReference>
<dbReference type="iPTMnet" id="Q9H3R2"/>
<dbReference type="PhosphoSitePlus" id="Q9H3R2"/>
<dbReference type="BioMuta" id="MUC13"/>
<dbReference type="DMDM" id="296438300"/>
<dbReference type="jPOST" id="Q9H3R2"/>
<dbReference type="MassIVE" id="Q9H3R2"/>
<dbReference type="PaxDb" id="9606-ENSP00000485028"/>
<dbReference type="PeptideAtlas" id="Q9H3R2"/>
<dbReference type="ProteomicsDB" id="80744"/>
<dbReference type="Antibodypedia" id="33002">
    <property type="antibodies" value="328 antibodies from 32 providers"/>
</dbReference>
<dbReference type="DNASU" id="56667"/>
<dbReference type="Ensembl" id="ENST00000616727.4">
    <property type="protein sequence ID" value="ENSP00000485028.1"/>
    <property type="gene ID" value="ENSG00000173702.7"/>
</dbReference>
<dbReference type="GeneID" id="56667"/>
<dbReference type="KEGG" id="hsa:56667"/>
<dbReference type="MANE-Select" id="ENST00000616727.4">
    <property type="protein sequence ID" value="ENSP00000485028.1"/>
    <property type="RefSeq nucleotide sequence ID" value="NM_033049.4"/>
    <property type="RefSeq protein sequence ID" value="NP_149038.3"/>
</dbReference>
<dbReference type="UCSC" id="uc032sai.1">
    <property type="organism name" value="human"/>
</dbReference>
<dbReference type="AGR" id="HGNC:7511"/>
<dbReference type="CTD" id="56667"/>
<dbReference type="DisGeNET" id="56667"/>
<dbReference type="GeneCards" id="MUC13"/>
<dbReference type="HGNC" id="HGNC:7511">
    <property type="gene designation" value="MUC13"/>
</dbReference>
<dbReference type="HPA" id="ENSG00000173702">
    <property type="expression patterns" value="Tissue enriched (intestine)"/>
</dbReference>
<dbReference type="MIM" id="612181">
    <property type="type" value="gene"/>
</dbReference>
<dbReference type="neXtProt" id="NX_Q9H3R2"/>
<dbReference type="OpenTargets" id="ENSG00000173702"/>
<dbReference type="PharmGKB" id="PA31312"/>
<dbReference type="VEuPathDB" id="HostDB:ENSG00000173702"/>
<dbReference type="eggNOG" id="ENOG502S3PG">
    <property type="taxonomic scope" value="Eukaryota"/>
</dbReference>
<dbReference type="GeneTree" id="ENSGT00940000154419"/>
<dbReference type="HOGENOM" id="CLU_020534_1_0_1"/>
<dbReference type="InParanoid" id="Q9H3R2"/>
<dbReference type="OMA" id="HKQCLIK"/>
<dbReference type="OrthoDB" id="8938333at2759"/>
<dbReference type="PAN-GO" id="Q9H3R2">
    <property type="GO annotations" value="0 GO annotations based on evolutionary models"/>
</dbReference>
<dbReference type="TreeFam" id="TF335941"/>
<dbReference type="PathwayCommons" id="Q9H3R2"/>
<dbReference type="Reactome" id="R-HSA-5083625">
    <property type="pathway name" value="Defective GALNT3 causes HFTC"/>
</dbReference>
<dbReference type="Reactome" id="R-HSA-5083632">
    <property type="pathway name" value="Defective C1GALT1C1 causes TNPS"/>
</dbReference>
<dbReference type="Reactome" id="R-HSA-5083636">
    <property type="pathway name" value="Defective GALNT12 causes CRCS1"/>
</dbReference>
<dbReference type="Reactome" id="R-HSA-5621480">
    <property type="pathway name" value="Dectin-2 family"/>
</dbReference>
<dbReference type="Reactome" id="R-HSA-913709">
    <property type="pathway name" value="O-linked glycosylation of mucins"/>
</dbReference>
<dbReference type="Reactome" id="R-HSA-9696264">
    <property type="pathway name" value="RND3 GTPase cycle"/>
</dbReference>
<dbReference type="Reactome" id="R-HSA-9696270">
    <property type="pathway name" value="RND2 GTPase cycle"/>
</dbReference>
<dbReference type="Reactome" id="R-HSA-9696273">
    <property type="pathway name" value="RND1 GTPase cycle"/>
</dbReference>
<dbReference type="Reactome" id="R-HSA-977068">
    <property type="pathway name" value="Termination of O-glycan biosynthesis"/>
</dbReference>
<dbReference type="SignaLink" id="Q9H3R2"/>
<dbReference type="BioGRID-ORCS" id="56667">
    <property type="hits" value="7 hits in 316 CRISPR screens"/>
</dbReference>
<dbReference type="ChiTaRS" id="MUC13">
    <property type="organism name" value="human"/>
</dbReference>
<dbReference type="GenomeRNAi" id="56667"/>
<dbReference type="Pharos" id="Q9H3R2">
    <property type="development level" value="Tbio"/>
</dbReference>
<dbReference type="PRO" id="PR:Q9H3R2"/>
<dbReference type="Proteomes" id="UP000005640">
    <property type="component" value="Chromosome 3"/>
</dbReference>
<dbReference type="RNAct" id="Q9H3R2">
    <property type="molecule type" value="protein"/>
</dbReference>
<dbReference type="Bgee" id="ENSG00000173702">
    <property type="expression patterns" value="Expressed in jejunal mucosa and 135 other cell types or tissues"/>
</dbReference>
<dbReference type="ExpressionAtlas" id="Q9H3R2">
    <property type="expression patterns" value="baseline and differential"/>
</dbReference>
<dbReference type="GO" id="GO:0016324">
    <property type="term" value="C:apical plasma membrane"/>
    <property type="evidence" value="ECO:0000314"/>
    <property type="project" value="UniProtKB"/>
</dbReference>
<dbReference type="GO" id="GO:0005829">
    <property type="term" value="C:cytosol"/>
    <property type="evidence" value="ECO:0000315"/>
    <property type="project" value="UniProtKB"/>
</dbReference>
<dbReference type="GO" id="GO:0005615">
    <property type="term" value="C:extracellular space"/>
    <property type="evidence" value="ECO:0000314"/>
    <property type="project" value="UniProtKB"/>
</dbReference>
<dbReference type="GO" id="GO:0005796">
    <property type="term" value="C:Golgi lumen"/>
    <property type="evidence" value="ECO:0000304"/>
    <property type="project" value="Reactome"/>
</dbReference>
<dbReference type="GO" id="GO:0005886">
    <property type="term" value="C:plasma membrane"/>
    <property type="evidence" value="ECO:0000304"/>
    <property type="project" value="Reactome"/>
</dbReference>
<dbReference type="GO" id="GO:0042803">
    <property type="term" value="F:protein homodimerization activity"/>
    <property type="evidence" value="ECO:0000314"/>
    <property type="project" value="UniProtKB"/>
</dbReference>
<dbReference type="GO" id="GO:0030277">
    <property type="term" value="P:maintenance of gastrointestinal epithelium"/>
    <property type="evidence" value="ECO:0000315"/>
    <property type="project" value="UniProtKB"/>
</dbReference>
<dbReference type="InterPro" id="IPR000742">
    <property type="entry name" value="EGF-like_dom"/>
</dbReference>
<dbReference type="InterPro" id="IPR009030">
    <property type="entry name" value="Growth_fac_rcpt_cys_sf"/>
</dbReference>
<dbReference type="InterPro" id="IPR000082">
    <property type="entry name" value="SEA_dom"/>
</dbReference>
<dbReference type="PANTHER" id="PTHR24037">
    <property type="entry name" value="HEART DEVELOPMENT PROTEIN WITH EGF-LIKE DOMAINS 1"/>
    <property type="match status" value="1"/>
</dbReference>
<dbReference type="PANTHER" id="PTHR24037:SF10">
    <property type="entry name" value="MUCIN-13"/>
    <property type="match status" value="1"/>
</dbReference>
<dbReference type="Pfam" id="PF01390">
    <property type="entry name" value="SEA"/>
    <property type="match status" value="1"/>
</dbReference>
<dbReference type="SMART" id="SM00181">
    <property type="entry name" value="EGF"/>
    <property type="match status" value="3"/>
</dbReference>
<dbReference type="SUPFAM" id="SSF57184">
    <property type="entry name" value="Growth factor receptor domain"/>
    <property type="match status" value="1"/>
</dbReference>
<dbReference type="PROSITE" id="PS01186">
    <property type="entry name" value="EGF_2"/>
    <property type="match status" value="2"/>
</dbReference>
<dbReference type="PROSITE" id="PS50026">
    <property type="entry name" value="EGF_3"/>
    <property type="match status" value="1"/>
</dbReference>
<dbReference type="PROSITE" id="PS50024">
    <property type="entry name" value="SEA"/>
    <property type="match status" value="1"/>
</dbReference>